<comment type="catalytic activity">
    <reaction evidence="2">
        <text>a carboxylic ester + H2O = an alcohol + a carboxylate + H(+)</text>
        <dbReference type="Rhea" id="RHEA:21164"/>
        <dbReference type="ChEBI" id="CHEBI:15377"/>
        <dbReference type="ChEBI" id="CHEBI:15378"/>
        <dbReference type="ChEBI" id="CHEBI:29067"/>
        <dbReference type="ChEBI" id="CHEBI:30879"/>
        <dbReference type="ChEBI" id="CHEBI:33308"/>
        <dbReference type="EC" id="3.1.1.1"/>
    </reaction>
</comment>
<comment type="subcellular location">
    <subcellularLocation>
        <location>Endoplasmic reticulum lumen</location>
    </subcellularLocation>
</comment>
<comment type="tissue specificity">
    <text>Expressed only in the intestine.</text>
</comment>
<comment type="developmental stage">
    <text>Appears in mid-proliferation phase when the developing gut has four to eight cells.</text>
</comment>
<comment type="similarity">
    <text evidence="3">Belongs to the type-B carboxylesterase/lipase family.</text>
</comment>
<accession>Q04456</accession>
<accession>A8X267</accession>
<evidence type="ECO:0000250" key="1"/>
<evidence type="ECO:0000255" key="2">
    <source>
        <dbReference type="PROSITE-ProRule" id="PRU10039"/>
    </source>
</evidence>
<evidence type="ECO:0000305" key="3"/>
<protein>
    <recommendedName>
        <fullName>Gut esterase 1</fullName>
        <ecNumber>3.1.1.1</ecNumber>
    </recommendedName>
    <alternativeName>
        <fullName>Non-specific carboxylesterase</fullName>
    </alternativeName>
</protein>
<feature type="signal peptide">
    <location>
        <begin position="1"/>
        <end position="16"/>
    </location>
</feature>
<feature type="chain" id="PRO_0000008550" description="Gut esterase 1">
    <location>
        <begin position="17"/>
        <end position="562"/>
    </location>
</feature>
<feature type="short sequence motif" description="Prevents secretion from ER">
    <location>
        <begin position="559"/>
        <end position="562"/>
    </location>
</feature>
<feature type="active site" description="Acyl-ester intermediate" evidence="2">
    <location>
        <position position="199"/>
    </location>
</feature>
<feature type="active site" description="Charge relay system" evidence="1">
    <location>
        <position position="320"/>
    </location>
</feature>
<feature type="active site" description="Charge relay system" evidence="1">
    <location>
        <position position="451"/>
    </location>
</feature>
<feature type="disulfide bond" evidence="1">
    <location>
        <begin position="75"/>
        <end position="93"/>
    </location>
</feature>
<feature type="disulfide bond" evidence="1">
    <location>
        <begin position="251"/>
        <end position="259"/>
    </location>
</feature>
<name>EST1_CAEBR</name>
<reference key="1">
    <citation type="journal article" date="1993" name="J. Mol. Biol.">
        <title>The gut esterase gene (ges-1) from the nematodes Caenorhabditis elegans and Caenorhabditis briggsae.</title>
        <authorList>
            <person name="Kennedy B.P."/>
            <person name="Aamodt E.J."/>
            <person name="Allen F.L."/>
            <person name="Chung M.A."/>
            <person name="Heschl M.F.P."/>
            <person name="McGhee J.D."/>
        </authorList>
    </citation>
    <scope>NUCLEOTIDE SEQUENCE [GENOMIC DNA]</scope>
</reference>
<reference key="2">
    <citation type="journal article" date="2003" name="PLoS Biol.">
        <title>The genome sequence of Caenorhabditis briggsae: a platform for comparative genomics.</title>
        <authorList>
            <person name="Stein L.D."/>
            <person name="Bao Z."/>
            <person name="Blasiar D."/>
            <person name="Blumenthal T."/>
            <person name="Brent M.R."/>
            <person name="Chen N."/>
            <person name="Chinwalla A."/>
            <person name="Clarke L."/>
            <person name="Clee C."/>
            <person name="Coghlan A."/>
            <person name="Coulson A."/>
            <person name="D'Eustachio P."/>
            <person name="Fitch D.H.A."/>
            <person name="Fulton L.A."/>
            <person name="Fulton R.E."/>
            <person name="Griffiths-Jones S."/>
            <person name="Harris T.W."/>
            <person name="Hillier L.W."/>
            <person name="Kamath R."/>
            <person name="Kuwabara P.E."/>
            <person name="Mardis E.R."/>
            <person name="Marra M.A."/>
            <person name="Miner T.L."/>
            <person name="Minx P."/>
            <person name="Mullikin J.C."/>
            <person name="Plumb R.W."/>
            <person name="Rogers J."/>
            <person name="Schein J.E."/>
            <person name="Sohrmann M."/>
            <person name="Spieth J."/>
            <person name="Stajich J.E."/>
            <person name="Wei C."/>
            <person name="Willey D."/>
            <person name="Wilson R.K."/>
            <person name="Durbin R.M."/>
            <person name="Waterston R.H."/>
        </authorList>
    </citation>
    <scope>NUCLEOTIDE SEQUENCE [LARGE SCALE GENOMIC DNA]</scope>
    <source>
        <strain>AF16</strain>
    </source>
</reference>
<gene>
    <name type="primary">ges-1</name>
    <name type="ORF">CBG06418</name>
</gene>
<keyword id="KW-1015">Disulfide bond</keyword>
<keyword id="KW-0256">Endoplasmic reticulum</keyword>
<keyword id="KW-0378">Hydrolase</keyword>
<keyword id="KW-1185">Reference proteome</keyword>
<keyword id="KW-0719">Serine esterase</keyword>
<keyword id="KW-0732">Signal</keyword>
<proteinExistence type="evidence at transcript level"/>
<sequence length="562" mass="63819">MRVLLASLLIFGACWAGPVVNTNYGKVEGFEYGAAEVFLAIPFAKPPVDNLRFEKPEAPEPWEDVYQATQFRNDCTPHYRLVAQFSSYSGEDCLTLNVIKPKTIEKKLPVLFWVHGGGYEIGSGSQHGYEFFADRYTSQGVIVVTIQYRLGFMGFFSEGTSDAPGNYGLFDQAAALRFVKENIGNFGGDPDDITIWGYSAGAASVSQLTMSPYTHDLYSKAIIMSASSFVGWATGPNVIDTSKQLAEILGCPWPGAKECMKKKTLHEIFDAVETQGWTTGTIDILRWSPVIDGDYLPKNPENLINDAPIKPTLIGMSNKEGSYFATMNMGRVIADFGLSPEEIPKVDEDFISEIIDRKLLYNNRYGENRQKVWDQILDYYTKQGKPERDLNGFYVDRYAELLSDITFNVPILREITARVERKTPVWTYRFDHYNEQIWKKYIPEQAKGSPHANEYHYLFNMPVMAQIDFKKEPESWLQRDLIDMVVSFAKTGVPHIQDVEWRPVSDPDDVNFLNFQSSGVSVKHGLFQEPLDFWNNLREREGFDLVDPAYSKTTSNSEKDEL</sequence>
<dbReference type="EC" id="3.1.1.1"/>
<dbReference type="EMBL" id="M96144">
    <property type="protein sequence ID" value="AAA28056.1"/>
    <property type="molecule type" value="Genomic_DNA"/>
</dbReference>
<dbReference type="EMBL" id="HE601320">
    <property type="protein sequence ID" value="CAP26727.1"/>
    <property type="molecule type" value="Genomic_DNA"/>
</dbReference>
<dbReference type="PIR" id="S27782">
    <property type="entry name" value="S27782"/>
</dbReference>
<dbReference type="SMR" id="Q04456"/>
<dbReference type="FunCoup" id="Q04456">
    <property type="interactions" value="72"/>
</dbReference>
<dbReference type="STRING" id="6238.Q04456"/>
<dbReference type="ESTHER" id="caebr-ges1e">
    <property type="family name" value="Carb_B_Nematoda"/>
</dbReference>
<dbReference type="EnsemblMetazoa" id="CBG06418.1">
    <property type="protein sequence ID" value="CBG06418.1"/>
    <property type="gene ID" value="WBGene00028697"/>
</dbReference>
<dbReference type="KEGG" id="cbr:CBG_06418"/>
<dbReference type="CTD" id="8589362"/>
<dbReference type="WormBase" id="CBG06418">
    <property type="protein sequence ID" value="CBP15596"/>
    <property type="gene ID" value="WBGene00028697"/>
    <property type="gene designation" value="Cbr-ges-1"/>
</dbReference>
<dbReference type="eggNOG" id="KOG1516">
    <property type="taxonomic scope" value="Eukaryota"/>
</dbReference>
<dbReference type="HOGENOM" id="CLU_006586_13_3_1"/>
<dbReference type="InParanoid" id="Q04456"/>
<dbReference type="OMA" id="HANEYHY"/>
<dbReference type="Proteomes" id="UP000008549">
    <property type="component" value="Unassembled WGS sequence"/>
</dbReference>
<dbReference type="GO" id="GO:0005788">
    <property type="term" value="C:endoplasmic reticulum lumen"/>
    <property type="evidence" value="ECO:0007669"/>
    <property type="project" value="UniProtKB-SubCell"/>
</dbReference>
<dbReference type="GO" id="GO:0005777">
    <property type="term" value="C:peroxisome"/>
    <property type="evidence" value="ECO:0007669"/>
    <property type="project" value="EnsemblMetazoa"/>
</dbReference>
<dbReference type="GO" id="GO:0106435">
    <property type="term" value="F:carboxylesterase activity"/>
    <property type="evidence" value="ECO:0007669"/>
    <property type="project" value="UniProtKB-EC"/>
</dbReference>
<dbReference type="GO" id="GO:0044248">
    <property type="term" value="P:cellular catabolic process"/>
    <property type="evidence" value="ECO:0007669"/>
    <property type="project" value="EnsemblMetazoa"/>
</dbReference>
<dbReference type="FunFam" id="3.40.50.1820:FF:000317">
    <property type="entry name" value="Carboxylic ester hydrolase"/>
    <property type="match status" value="1"/>
</dbReference>
<dbReference type="Gene3D" id="3.40.50.1820">
    <property type="entry name" value="alpha/beta hydrolase"/>
    <property type="match status" value="1"/>
</dbReference>
<dbReference type="InterPro" id="IPR029058">
    <property type="entry name" value="AB_hydrolase_fold"/>
</dbReference>
<dbReference type="InterPro" id="IPR002018">
    <property type="entry name" value="CarbesteraseB"/>
</dbReference>
<dbReference type="InterPro" id="IPR019826">
    <property type="entry name" value="Carboxylesterase_B_AS"/>
</dbReference>
<dbReference type="InterPro" id="IPR019819">
    <property type="entry name" value="Carboxylesterase_B_CS"/>
</dbReference>
<dbReference type="InterPro" id="IPR050309">
    <property type="entry name" value="Type-B_Carboxylest/Lipase"/>
</dbReference>
<dbReference type="PANTHER" id="PTHR11559">
    <property type="entry name" value="CARBOXYLESTERASE"/>
    <property type="match status" value="1"/>
</dbReference>
<dbReference type="Pfam" id="PF00135">
    <property type="entry name" value="COesterase"/>
    <property type="match status" value="1"/>
</dbReference>
<dbReference type="SUPFAM" id="SSF53474">
    <property type="entry name" value="alpha/beta-Hydrolases"/>
    <property type="match status" value="1"/>
</dbReference>
<dbReference type="PROSITE" id="PS00122">
    <property type="entry name" value="CARBOXYLESTERASE_B_1"/>
    <property type="match status" value="1"/>
</dbReference>
<dbReference type="PROSITE" id="PS00941">
    <property type="entry name" value="CARBOXYLESTERASE_B_2"/>
    <property type="match status" value="1"/>
</dbReference>
<dbReference type="PROSITE" id="PS00014">
    <property type="entry name" value="ER_TARGET"/>
    <property type="match status" value="1"/>
</dbReference>
<organism>
    <name type="scientific">Caenorhabditis briggsae</name>
    <dbReference type="NCBI Taxonomy" id="6238"/>
    <lineage>
        <taxon>Eukaryota</taxon>
        <taxon>Metazoa</taxon>
        <taxon>Ecdysozoa</taxon>
        <taxon>Nematoda</taxon>
        <taxon>Chromadorea</taxon>
        <taxon>Rhabditida</taxon>
        <taxon>Rhabditina</taxon>
        <taxon>Rhabditomorpha</taxon>
        <taxon>Rhabditoidea</taxon>
        <taxon>Rhabditidae</taxon>
        <taxon>Peloderinae</taxon>
        <taxon>Caenorhabditis</taxon>
    </lineage>
</organism>